<protein>
    <recommendedName>
        <fullName evidence="1">Protease HtpX homolog</fullName>
        <ecNumber evidence="1">3.4.24.-</ecNumber>
    </recommendedName>
</protein>
<accession>B2T1K8</accession>
<evidence type="ECO:0000255" key="1">
    <source>
        <dbReference type="HAMAP-Rule" id="MF_00188"/>
    </source>
</evidence>
<gene>
    <name evidence="1" type="primary">htpX</name>
    <name type="ordered locus">Bphyt_0312</name>
</gene>
<feature type="chain" id="PRO_1000098812" description="Protease HtpX homolog">
    <location>
        <begin position="1"/>
        <end position="285"/>
    </location>
</feature>
<feature type="transmembrane region" description="Helical" evidence="1">
    <location>
        <begin position="7"/>
        <end position="27"/>
    </location>
</feature>
<feature type="transmembrane region" description="Helical" evidence="1">
    <location>
        <begin position="30"/>
        <end position="50"/>
    </location>
</feature>
<feature type="transmembrane region" description="Helical" evidence="1">
    <location>
        <begin position="141"/>
        <end position="161"/>
    </location>
</feature>
<feature type="transmembrane region" description="Helical" evidence="1">
    <location>
        <begin position="177"/>
        <end position="197"/>
    </location>
</feature>
<feature type="active site" evidence="1">
    <location>
        <position position="132"/>
    </location>
</feature>
<feature type="binding site" evidence="1">
    <location>
        <position position="131"/>
    </location>
    <ligand>
        <name>Zn(2+)</name>
        <dbReference type="ChEBI" id="CHEBI:29105"/>
        <note>catalytic</note>
    </ligand>
</feature>
<feature type="binding site" evidence="1">
    <location>
        <position position="135"/>
    </location>
    <ligand>
        <name>Zn(2+)</name>
        <dbReference type="ChEBI" id="CHEBI:29105"/>
        <note>catalytic</note>
    </ligand>
</feature>
<feature type="binding site" evidence="1">
    <location>
        <position position="202"/>
    </location>
    <ligand>
        <name>Zn(2+)</name>
        <dbReference type="ChEBI" id="CHEBI:29105"/>
        <note>catalytic</note>
    </ligand>
</feature>
<name>HTPX_PARPJ</name>
<sequence length="285" mass="30838">MFNWVKTAMLMAAITALFIVIGGMIGGSRGMTIALVIALGMNFFSYWFSDKMVLRMYNAQEVDETSAPQFYRMVRELSTRAGLPMPRVYLINEDAPNAFATGRNPEHAAVAATTGILRVLSEREMRGVMAHELSHVKHRDILISTISATMAGAISALANFAMFFGSRDENGRSTNPIAGIAVALLAPIAGALIQMAISRAREFEADRGGAQISGDPQALASALDKIHRYASGIPFPTAEQHPATAQMMIMNPLSGGGIANLFSTHPATEERIARLMEMARTGRFE</sequence>
<comment type="cofactor">
    <cofactor evidence="1">
        <name>Zn(2+)</name>
        <dbReference type="ChEBI" id="CHEBI:29105"/>
    </cofactor>
    <text evidence="1">Binds 1 zinc ion per subunit.</text>
</comment>
<comment type="subcellular location">
    <subcellularLocation>
        <location evidence="1">Cell inner membrane</location>
        <topology evidence="1">Multi-pass membrane protein</topology>
    </subcellularLocation>
</comment>
<comment type="similarity">
    <text evidence="1">Belongs to the peptidase M48B family.</text>
</comment>
<proteinExistence type="inferred from homology"/>
<keyword id="KW-0997">Cell inner membrane</keyword>
<keyword id="KW-1003">Cell membrane</keyword>
<keyword id="KW-0378">Hydrolase</keyword>
<keyword id="KW-0472">Membrane</keyword>
<keyword id="KW-0479">Metal-binding</keyword>
<keyword id="KW-0482">Metalloprotease</keyword>
<keyword id="KW-0645">Protease</keyword>
<keyword id="KW-0812">Transmembrane</keyword>
<keyword id="KW-1133">Transmembrane helix</keyword>
<keyword id="KW-0862">Zinc</keyword>
<dbReference type="EC" id="3.4.24.-" evidence="1"/>
<dbReference type="EMBL" id="CP001052">
    <property type="protein sequence ID" value="ACD14737.1"/>
    <property type="molecule type" value="Genomic_DNA"/>
</dbReference>
<dbReference type="RefSeq" id="WP_012431382.1">
    <property type="nucleotide sequence ID" value="NC_010681.1"/>
</dbReference>
<dbReference type="SMR" id="B2T1K8"/>
<dbReference type="STRING" id="398527.Bphyt_0312"/>
<dbReference type="GeneID" id="97306130"/>
<dbReference type="KEGG" id="bpy:Bphyt_0312"/>
<dbReference type="eggNOG" id="COG0501">
    <property type="taxonomic scope" value="Bacteria"/>
</dbReference>
<dbReference type="HOGENOM" id="CLU_042266_3_0_4"/>
<dbReference type="OrthoDB" id="15218at2"/>
<dbReference type="Proteomes" id="UP000001739">
    <property type="component" value="Chromosome 1"/>
</dbReference>
<dbReference type="GO" id="GO:0005886">
    <property type="term" value="C:plasma membrane"/>
    <property type="evidence" value="ECO:0007669"/>
    <property type="project" value="UniProtKB-SubCell"/>
</dbReference>
<dbReference type="GO" id="GO:0004222">
    <property type="term" value="F:metalloendopeptidase activity"/>
    <property type="evidence" value="ECO:0007669"/>
    <property type="project" value="UniProtKB-UniRule"/>
</dbReference>
<dbReference type="GO" id="GO:0008270">
    <property type="term" value="F:zinc ion binding"/>
    <property type="evidence" value="ECO:0007669"/>
    <property type="project" value="UniProtKB-UniRule"/>
</dbReference>
<dbReference type="GO" id="GO:0006508">
    <property type="term" value="P:proteolysis"/>
    <property type="evidence" value="ECO:0007669"/>
    <property type="project" value="UniProtKB-KW"/>
</dbReference>
<dbReference type="CDD" id="cd07336">
    <property type="entry name" value="M48B_HtpX_like"/>
    <property type="match status" value="1"/>
</dbReference>
<dbReference type="Gene3D" id="3.30.2010.10">
    <property type="entry name" value="Metalloproteases ('zincins'), catalytic domain"/>
    <property type="match status" value="1"/>
</dbReference>
<dbReference type="HAMAP" id="MF_00188">
    <property type="entry name" value="Pept_M48_protease_HtpX"/>
    <property type="match status" value="1"/>
</dbReference>
<dbReference type="InterPro" id="IPR050083">
    <property type="entry name" value="HtpX_protease"/>
</dbReference>
<dbReference type="InterPro" id="IPR022919">
    <property type="entry name" value="Pept_M48_protease_HtpX"/>
</dbReference>
<dbReference type="InterPro" id="IPR001915">
    <property type="entry name" value="Peptidase_M48"/>
</dbReference>
<dbReference type="NCBIfam" id="NF002363">
    <property type="entry name" value="PRK01345.1"/>
    <property type="match status" value="1"/>
</dbReference>
<dbReference type="NCBIfam" id="NF002826">
    <property type="entry name" value="PRK03001.1"/>
    <property type="match status" value="1"/>
</dbReference>
<dbReference type="PANTHER" id="PTHR43221">
    <property type="entry name" value="PROTEASE HTPX"/>
    <property type="match status" value="1"/>
</dbReference>
<dbReference type="PANTHER" id="PTHR43221:SF1">
    <property type="entry name" value="PROTEASE HTPX"/>
    <property type="match status" value="1"/>
</dbReference>
<dbReference type="Pfam" id="PF01435">
    <property type="entry name" value="Peptidase_M48"/>
    <property type="match status" value="1"/>
</dbReference>
<reference key="1">
    <citation type="journal article" date="2011" name="J. Bacteriol.">
        <title>Complete genome sequence of the plant growth-promoting endophyte Burkholderia phytofirmans strain PsJN.</title>
        <authorList>
            <person name="Weilharter A."/>
            <person name="Mitter B."/>
            <person name="Shin M.V."/>
            <person name="Chain P.S."/>
            <person name="Nowak J."/>
            <person name="Sessitsch A."/>
        </authorList>
    </citation>
    <scope>NUCLEOTIDE SEQUENCE [LARGE SCALE GENOMIC DNA]</scope>
    <source>
        <strain>DSM 17436 / LMG 22146 / PsJN</strain>
    </source>
</reference>
<organism>
    <name type="scientific">Paraburkholderia phytofirmans (strain DSM 17436 / LMG 22146 / PsJN)</name>
    <name type="common">Burkholderia phytofirmans</name>
    <dbReference type="NCBI Taxonomy" id="398527"/>
    <lineage>
        <taxon>Bacteria</taxon>
        <taxon>Pseudomonadati</taxon>
        <taxon>Pseudomonadota</taxon>
        <taxon>Betaproteobacteria</taxon>
        <taxon>Burkholderiales</taxon>
        <taxon>Burkholderiaceae</taxon>
        <taxon>Paraburkholderia</taxon>
    </lineage>
</organism>